<proteinExistence type="inferred from homology"/>
<accession>Q98PV8</accession>
<dbReference type="EMBL" id="AL445565">
    <property type="protein sequence ID" value="CAC13784.1"/>
    <property type="molecule type" value="Genomic_DNA"/>
</dbReference>
<dbReference type="PIR" id="C90588">
    <property type="entry name" value="C90588"/>
</dbReference>
<dbReference type="RefSeq" id="WP_010925412.1">
    <property type="nucleotide sequence ID" value="NC_002771.1"/>
</dbReference>
<dbReference type="SMR" id="Q98PV8"/>
<dbReference type="STRING" id="272635.gene:17577218"/>
<dbReference type="KEGG" id="mpu:MYPU_6110"/>
<dbReference type="eggNOG" id="COG0360">
    <property type="taxonomic scope" value="Bacteria"/>
</dbReference>
<dbReference type="HOGENOM" id="CLU_137913_0_0_14"/>
<dbReference type="BioCyc" id="MPUL272635:G1GT6-621-MONOMER"/>
<dbReference type="Proteomes" id="UP000000528">
    <property type="component" value="Chromosome"/>
</dbReference>
<dbReference type="GO" id="GO:1990904">
    <property type="term" value="C:ribonucleoprotein complex"/>
    <property type="evidence" value="ECO:0007669"/>
    <property type="project" value="UniProtKB-KW"/>
</dbReference>
<dbReference type="GO" id="GO:0005840">
    <property type="term" value="C:ribosome"/>
    <property type="evidence" value="ECO:0007669"/>
    <property type="project" value="UniProtKB-KW"/>
</dbReference>
<dbReference type="GO" id="GO:0019843">
    <property type="term" value="F:rRNA binding"/>
    <property type="evidence" value="ECO:0007669"/>
    <property type="project" value="UniProtKB-UniRule"/>
</dbReference>
<dbReference type="GO" id="GO:0003735">
    <property type="term" value="F:structural constituent of ribosome"/>
    <property type="evidence" value="ECO:0007669"/>
    <property type="project" value="InterPro"/>
</dbReference>
<dbReference type="GO" id="GO:0006412">
    <property type="term" value="P:translation"/>
    <property type="evidence" value="ECO:0007669"/>
    <property type="project" value="UniProtKB-UniRule"/>
</dbReference>
<dbReference type="CDD" id="cd00473">
    <property type="entry name" value="bS6"/>
    <property type="match status" value="1"/>
</dbReference>
<dbReference type="Gene3D" id="3.30.70.60">
    <property type="match status" value="1"/>
</dbReference>
<dbReference type="HAMAP" id="MF_00360">
    <property type="entry name" value="Ribosomal_bS6"/>
    <property type="match status" value="1"/>
</dbReference>
<dbReference type="InterPro" id="IPR000529">
    <property type="entry name" value="Ribosomal_bS6"/>
</dbReference>
<dbReference type="InterPro" id="IPR035980">
    <property type="entry name" value="Ribosomal_bS6_sf"/>
</dbReference>
<dbReference type="InterPro" id="IPR020814">
    <property type="entry name" value="Ribosomal_S6_plastid/chlpt"/>
</dbReference>
<dbReference type="InterPro" id="IPR014717">
    <property type="entry name" value="Transl_elong_EF1B/ribsomal_bS6"/>
</dbReference>
<dbReference type="NCBIfam" id="TIGR00166">
    <property type="entry name" value="S6"/>
    <property type="match status" value="1"/>
</dbReference>
<dbReference type="Pfam" id="PF01250">
    <property type="entry name" value="Ribosomal_S6"/>
    <property type="match status" value="1"/>
</dbReference>
<dbReference type="SUPFAM" id="SSF54995">
    <property type="entry name" value="Ribosomal protein S6"/>
    <property type="match status" value="1"/>
</dbReference>
<gene>
    <name evidence="1" type="primary">rpsF</name>
    <name type="ordered locus">MYPU_6110</name>
</gene>
<organism>
    <name type="scientific">Mycoplasmopsis pulmonis (strain UAB CTIP)</name>
    <name type="common">Mycoplasma pulmonis</name>
    <dbReference type="NCBI Taxonomy" id="272635"/>
    <lineage>
        <taxon>Bacteria</taxon>
        <taxon>Bacillati</taxon>
        <taxon>Mycoplasmatota</taxon>
        <taxon>Mycoplasmoidales</taxon>
        <taxon>Metamycoplasmataceae</taxon>
        <taxon>Mycoplasmopsis</taxon>
    </lineage>
</organism>
<evidence type="ECO:0000255" key="1">
    <source>
        <dbReference type="HAMAP-Rule" id="MF_00360"/>
    </source>
</evidence>
<evidence type="ECO:0000256" key="2">
    <source>
        <dbReference type="SAM" id="MobiDB-lite"/>
    </source>
</evidence>
<evidence type="ECO:0000305" key="3"/>
<reference key="1">
    <citation type="journal article" date="2001" name="Nucleic Acids Res.">
        <title>The complete genome sequence of the murine respiratory pathogen Mycoplasma pulmonis.</title>
        <authorList>
            <person name="Chambaud I."/>
            <person name="Heilig R."/>
            <person name="Ferris S."/>
            <person name="Barbe V."/>
            <person name="Samson D."/>
            <person name="Galisson F."/>
            <person name="Moszer I."/>
            <person name="Dybvig K."/>
            <person name="Wroblewski H."/>
            <person name="Viari A."/>
            <person name="Rocha E.P.C."/>
            <person name="Blanchard A."/>
        </authorList>
    </citation>
    <scope>NUCLEOTIDE SEQUENCE [LARGE SCALE GENOMIC DNA]</scope>
    <source>
        <strain>UAB CTIP</strain>
    </source>
</reference>
<name>RS6_MYCPU</name>
<keyword id="KW-1185">Reference proteome</keyword>
<keyword id="KW-0687">Ribonucleoprotein</keyword>
<keyword id="KW-0689">Ribosomal protein</keyword>
<keyword id="KW-0694">RNA-binding</keyword>
<keyword id="KW-0699">rRNA-binding</keyword>
<comment type="function">
    <text evidence="1">Binds together with bS18 to 16S ribosomal RNA.</text>
</comment>
<comment type="similarity">
    <text evidence="1">Belongs to the bacterial ribosomal protein bS6 family.</text>
</comment>
<sequence length="150" mass="17445">MNKYEIVIMLDPAENIEKAQSLLKSTFKSGVEKFEKLEFTKLAYEINKSKVAQYVLAIVNSQGKEEINEFVRKANITKTFWRHMIINLTSEKGINKPAKPKKTFKKTFVARKFSRDDESKTHSTEEPRRANTKSTYKKSTSFSQDNKNKK</sequence>
<feature type="chain" id="PRO_0000176801" description="Small ribosomal subunit protein bS6">
    <location>
        <begin position="1"/>
        <end position="150"/>
    </location>
</feature>
<feature type="region of interest" description="Disordered" evidence="2">
    <location>
        <begin position="92"/>
        <end position="150"/>
    </location>
</feature>
<feature type="compositionally biased region" description="Basic residues" evidence="2">
    <location>
        <begin position="98"/>
        <end position="109"/>
    </location>
</feature>
<feature type="compositionally biased region" description="Basic and acidic residues" evidence="2">
    <location>
        <begin position="113"/>
        <end position="129"/>
    </location>
</feature>
<feature type="compositionally biased region" description="Low complexity" evidence="2">
    <location>
        <begin position="132"/>
        <end position="141"/>
    </location>
</feature>
<protein>
    <recommendedName>
        <fullName evidence="1">Small ribosomal subunit protein bS6</fullName>
    </recommendedName>
    <alternativeName>
        <fullName evidence="3">30S ribosomal protein S6</fullName>
    </alternativeName>
</protein>